<feature type="signal peptide" evidence="1">
    <location>
        <begin position="1"/>
        <end position="21"/>
    </location>
</feature>
<feature type="chain" id="PRO_0000017835" description="Platelet-activating factor acetylhydrolase">
    <location>
        <begin position="22"/>
        <end position="422"/>
    </location>
</feature>
<feature type="active site" description="Nucleophile" evidence="1">
    <location>
        <position position="266"/>
    </location>
</feature>
<feature type="active site" description="Charge relay system" evidence="3">
    <location>
        <position position="289"/>
    </location>
</feature>
<feature type="active site" description="Charge relay system" evidence="3">
    <location>
        <position position="345"/>
    </location>
</feature>
<feature type="glycosylation site" description="N-linked (GlcNAc...) asparagine" evidence="2">
    <location>
        <position position="331"/>
    </location>
</feature>
<accession>Q90678</accession>
<dbReference type="EC" id="3.1.1.47"/>
<dbReference type="EMBL" id="U34278">
    <property type="protein sequence ID" value="AAC59717.1"/>
    <property type="molecule type" value="mRNA"/>
</dbReference>
<dbReference type="RefSeq" id="NP_990300.1">
    <property type="nucleotide sequence ID" value="NM_204969.1"/>
</dbReference>
<dbReference type="SMR" id="Q90678"/>
<dbReference type="FunCoup" id="Q90678">
    <property type="interactions" value="21"/>
</dbReference>
<dbReference type="STRING" id="9031.ENSGALP00000026919"/>
<dbReference type="ESTHER" id="chick-pafa">
    <property type="family name" value="PAF-Acetylhydrolase"/>
</dbReference>
<dbReference type="GlyCosmos" id="Q90678">
    <property type="glycosylation" value="1 site, No reported glycans"/>
</dbReference>
<dbReference type="GlyGen" id="Q90678">
    <property type="glycosylation" value="1 site"/>
</dbReference>
<dbReference type="PaxDb" id="9031-ENSGALP00000026919"/>
<dbReference type="GeneID" id="395816"/>
<dbReference type="KEGG" id="gga:395816"/>
<dbReference type="CTD" id="7941"/>
<dbReference type="VEuPathDB" id="HostDB:geneid_395816"/>
<dbReference type="eggNOG" id="KOG3847">
    <property type="taxonomic scope" value="Eukaryota"/>
</dbReference>
<dbReference type="InParanoid" id="Q90678"/>
<dbReference type="OrthoDB" id="2363873at2759"/>
<dbReference type="PhylomeDB" id="Q90678"/>
<dbReference type="PRO" id="PR:Q90678"/>
<dbReference type="Proteomes" id="UP000000539">
    <property type="component" value="Unassembled WGS sequence"/>
</dbReference>
<dbReference type="GO" id="GO:0005576">
    <property type="term" value="C:extracellular region"/>
    <property type="evidence" value="ECO:0007669"/>
    <property type="project" value="UniProtKB-SubCell"/>
</dbReference>
<dbReference type="GO" id="GO:0003847">
    <property type="term" value="F:1-alkyl-2-acetylglycerophosphocholine esterase activity"/>
    <property type="evidence" value="ECO:0000318"/>
    <property type="project" value="GO_Central"/>
</dbReference>
<dbReference type="GO" id="GO:0016042">
    <property type="term" value="P:lipid catabolic process"/>
    <property type="evidence" value="ECO:0007669"/>
    <property type="project" value="UniProtKB-KW"/>
</dbReference>
<dbReference type="FunFam" id="3.40.50.1820:FF:000062">
    <property type="entry name" value="Platelet-activating factor acetylhydrolase"/>
    <property type="match status" value="1"/>
</dbReference>
<dbReference type="Gene3D" id="3.40.50.1820">
    <property type="entry name" value="alpha/beta hydrolase"/>
    <property type="match status" value="1"/>
</dbReference>
<dbReference type="InterPro" id="IPR029058">
    <property type="entry name" value="AB_hydrolase_fold"/>
</dbReference>
<dbReference type="InterPro" id="IPR016715">
    <property type="entry name" value="PAF_acetylhydro_eukaryote"/>
</dbReference>
<dbReference type="PANTHER" id="PTHR10272">
    <property type="entry name" value="PLATELET-ACTIVATING FACTOR ACETYLHYDROLASE"/>
    <property type="match status" value="1"/>
</dbReference>
<dbReference type="PANTHER" id="PTHR10272:SF12">
    <property type="entry name" value="PLATELET-ACTIVATING FACTOR ACETYLHYDROLASE"/>
    <property type="match status" value="1"/>
</dbReference>
<dbReference type="Pfam" id="PF03403">
    <property type="entry name" value="PAF-AH_p_II"/>
    <property type="match status" value="1"/>
</dbReference>
<dbReference type="PIRSF" id="PIRSF018169">
    <property type="entry name" value="PAF_acetylhydrolase"/>
    <property type="match status" value="1"/>
</dbReference>
<dbReference type="SUPFAM" id="SSF53474">
    <property type="entry name" value="alpha/beta-Hydrolases"/>
    <property type="match status" value="1"/>
</dbReference>
<dbReference type="PROSITE" id="PS00120">
    <property type="entry name" value="LIPASE_SER"/>
    <property type="match status" value="1"/>
</dbReference>
<sequence>MASLWVRARRVFMKSRASGFSAKAATEMGSGGAEKGYRIPAGKGPHAVGCTDLMTGDAAEGSFLRLYYLSCDDTDTEETPWIPDKEYYQGLSDFLNVYRALGERLFQYYVGSVTCPAKSNAAFKPGEKYPLLVFSHGLGAFRTIYSAICIEMASQGFLVAAVEHRDESASATYFCKKKADSEPEEDQTSGVEKEWIYYRKLRAGEEERCLRHKQVQQRAQECIKALNLILKISSGEEVMNVLNSDFDWNHLKDSVDTSRIAVMGHSFGGATVIESLSKEIRFRCGIALDAWMLPVGDDTYQSSVQQPLLFINSEKFQWAANILKMKKLSSNDTNKKMITIKGSVHQSFPDFTFVSGEIIGKFFKLKGEIDPNEAIDICNHASLAFLQKHLSLKRDFDKWDSLVDGIGPNVISGTNIDLSPTE</sequence>
<keyword id="KW-0325">Glycoprotein</keyword>
<keyword id="KW-0378">Hydrolase</keyword>
<keyword id="KW-0442">Lipid degradation</keyword>
<keyword id="KW-0443">Lipid metabolism</keyword>
<keyword id="KW-1185">Reference proteome</keyword>
<keyword id="KW-0964">Secreted</keyword>
<keyword id="KW-0732">Signal</keyword>
<evidence type="ECO:0000250" key="1"/>
<evidence type="ECO:0000255" key="2"/>
<evidence type="ECO:0000255" key="3">
    <source>
        <dbReference type="PROSITE-ProRule" id="PRU10037"/>
    </source>
</evidence>
<evidence type="ECO:0000305" key="4"/>
<organism>
    <name type="scientific">Gallus gallus</name>
    <name type="common">Chicken</name>
    <dbReference type="NCBI Taxonomy" id="9031"/>
    <lineage>
        <taxon>Eukaryota</taxon>
        <taxon>Metazoa</taxon>
        <taxon>Chordata</taxon>
        <taxon>Craniata</taxon>
        <taxon>Vertebrata</taxon>
        <taxon>Euteleostomi</taxon>
        <taxon>Archelosauria</taxon>
        <taxon>Archosauria</taxon>
        <taxon>Dinosauria</taxon>
        <taxon>Saurischia</taxon>
        <taxon>Theropoda</taxon>
        <taxon>Coelurosauria</taxon>
        <taxon>Aves</taxon>
        <taxon>Neognathae</taxon>
        <taxon>Galloanserae</taxon>
        <taxon>Galliformes</taxon>
        <taxon>Phasianidae</taxon>
        <taxon>Phasianinae</taxon>
        <taxon>Gallus</taxon>
    </lineage>
</organism>
<name>PAFA_CHICK</name>
<protein>
    <recommendedName>
        <fullName>Platelet-activating factor acetylhydrolase</fullName>
        <shortName>PAF acetylhydrolase</shortName>
        <ecNumber>3.1.1.47</ecNumber>
    </recommendedName>
    <alternativeName>
        <fullName>1-alkyl-2-acetylglycerophosphocholine esterase</fullName>
    </alternativeName>
    <alternativeName>
        <fullName>2-acetyl-1-alkylglycerophosphocholine esterase</fullName>
    </alternativeName>
    <alternativeName>
        <fullName>LDL-associated phospholipase A2</fullName>
        <shortName>LDL-PLA(2)</shortName>
    </alternativeName>
    <alternativeName>
        <fullName>PAF 2-acylhydrolase</fullName>
    </alternativeName>
</protein>
<proteinExistence type="evidence at transcript level"/>
<gene>
    <name type="primary">PLA2G7</name>
</gene>
<comment type="function">
    <text>Modulates the action of platelet-activating factor (PAF) by hydrolyzing the sn-2 ester bond to yield the biologically inactive lyso-PAF. Has a specificity for substrates with a short residue at the sn-2 position. It is inactive against long-chain phospholipids.</text>
</comment>
<comment type="catalytic activity">
    <reaction>
        <text>a 1-O-alkyl-2-acetyl-sn-glycero-3-phosphocholine + H2O = a 1-O-alkyl-sn-glycero-3-phosphocholine + acetate + H(+)</text>
        <dbReference type="Rhea" id="RHEA:17777"/>
        <dbReference type="ChEBI" id="CHEBI:15377"/>
        <dbReference type="ChEBI" id="CHEBI:15378"/>
        <dbReference type="ChEBI" id="CHEBI:30089"/>
        <dbReference type="ChEBI" id="CHEBI:30909"/>
        <dbReference type="ChEBI" id="CHEBI:36707"/>
        <dbReference type="EC" id="3.1.1.47"/>
    </reaction>
</comment>
<comment type="subcellular location">
    <subcellularLocation>
        <location>Secreted</location>
        <location>Extracellular space</location>
    </subcellularLocation>
</comment>
<comment type="tissue specificity">
    <text>Plasma.</text>
</comment>
<comment type="similarity">
    <text evidence="4">Belongs to the AB hydrolase superfamily. Lipase family.</text>
</comment>
<reference key="1">
    <citation type="journal article" date="1995" name="J. Biol. Chem.">
        <title>Plasma platelet-activating factor acetylhydrolase is a secreted phospholipase A2 with a catalytic triad.</title>
        <authorList>
            <person name="Tjoelker L.W."/>
            <person name="Eberhardt C."/>
            <person name="Unger J."/>
            <person name="le Trong H."/>
            <person name="Zimmerman G.A."/>
            <person name="McIntyre T.M."/>
            <person name="Stafforini D.M."/>
            <person name="Prescott S.M."/>
            <person name="Gray P.W."/>
        </authorList>
    </citation>
    <scope>NUCLEOTIDE SEQUENCE [MRNA]</scope>
    <source>
        <tissue>Spleen</tissue>
    </source>
</reference>